<evidence type="ECO:0000255" key="1">
    <source>
        <dbReference type="HAMAP-Rule" id="MF_00150"/>
    </source>
</evidence>
<dbReference type="EC" id="1.2.1.38" evidence="1"/>
<dbReference type="EMBL" id="CP001103">
    <property type="protein sequence ID" value="AEA96682.1"/>
    <property type="molecule type" value="Genomic_DNA"/>
</dbReference>
<dbReference type="RefSeq" id="WP_012517037.1">
    <property type="nucleotide sequence ID" value="NC_011138.3"/>
</dbReference>
<dbReference type="SMR" id="B4S0H8"/>
<dbReference type="KEGG" id="amc:MADE_1002665"/>
<dbReference type="HOGENOM" id="CLU_006384_0_1_6"/>
<dbReference type="UniPathway" id="UPA00068">
    <property type="reaction ID" value="UER00108"/>
</dbReference>
<dbReference type="Proteomes" id="UP000001870">
    <property type="component" value="Chromosome"/>
</dbReference>
<dbReference type="GO" id="GO:0005737">
    <property type="term" value="C:cytoplasm"/>
    <property type="evidence" value="ECO:0007669"/>
    <property type="project" value="UniProtKB-SubCell"/>
</dbReference>
<dbReference type="GO" id="GO:0003942">
    <property type="term" value="F:N-acetyl-gamma-glutamyl-phosphate reductase activity"/>
    <property type="evidence" value="ECO:0007669"/>
    <property type="project" value="UniProtKB-UniRule"/>
</dbReference>
<dbReference type="GO" id="GO:0051287">
    <property type="term" value="F:NAD binding"/>
    <property type="evidence" value="ECO:0007669"/>
    <property type="project" value="InterPro"/>
</dbReference>
<dbReference type="GO" id="GO:0070401">
    <property type="term" value="F:NADP+ binding"/>
    <property type="evidence" value="ECO:0007669"/>
    <property type="project" value="InterPro"/>
</dbReference>
<dbReference type="GO" id="GO:0006526">
    <property type="term" value="P:L-arginine biosynthetic process"/>
    <property type="evidence" value="ECO:0007669"/>
    <property type="project" value="UniProtKB-UniRule"/>
</dbReference>
<dbReference type="CDD" id="cd23934">
    <property type="entry name" value="AGPR_1_C"/>
    <property type="match status" value="1"/>
</dbReference>
<dbReference type="CDD" id="cd17895">
    <property type="entry name" value="AGPR_1_N"/>
    <property type="match status" value="1"/>
</dbReference>
<dbReference type="FunFam" id="3.30.360.10:FF:000014">
    <property type="entry name" value="N-acetyl-gamma-glutamyl-phosphate reductase"/>
    <property type="match status" value="1"/>
</dbReference>
<dbReference type="Gene3D" id="3.30.360.10">
    <property type="entry name" value="Dihydrodipicolinate Reductase, domain 2"/>
    <property type="match status" value="1"/>
</dbReference>
<dbReference type="Gene3D" id="3.40.50.720">
    <property type="entry name" value="NAD(P)-binding Rossmann-like Domain"/>
    <property type="match status" value="1"/>
</dbReference>
<dbReference type="HAMAP" id="MF_00150">
    <property type="entry name" value="ArgC_type1"/>
    <property type="match status" value="1"/>
</dbReference>
<dbReference type="InterPro" id="IPR023013">
    <property type="entry name" value="AGPR_AS"/>
</dbReference>
<dbReference type="InterPro" id="IPR000706">
    <property type="entry name" value="AGPR_type-1"/>
</dbReference>
<dbReference type="InterPro" id="IPR036291">
    <property type="entry name" value="NAD(P)-bd_dom_sf"/>
</dbReference>
<dbReference type="InterPro" id="IPR050085">
    <property type="entry name" value="NAGSA_dehydrogenase"/>
</dbReference>
<dbReference type="InterPro" id="IPR000534">
    <property type="entry name" value="Semialdehyde_DH_NAD-bd"/>
</dbReference>
<dbReference type="NCBIfam" id="TIGR01850">
    <property type="entry name" value="argC"/>
    <property type="match status" value="1"/>
</dbReference>
<dbReference type="PANTHER" id="PTHR32338:SF10">
    <property type="entry name" value="N-ACETYL-GAMMA-GLUTAMYL-PHOSPHATE REDUCTASE, CHLOROPLASTIC-RELATED"/>
    <property type="match status" value="1"/>
</dbReference>
<dbReference type="PANTHER" id="PTHR32338">
    <property type="entry name" value="N-ACETYL-GAMMA-GLUTAMYL-PHOSPHATE REDUCTASE, CHLOROPLASTIC-RELATED-RELATED"/>
    <property type="match status" value="1"/>
</dbReference>
<dbReference type="Pfam" id="PF01118">
    <property type="entry name" value="Semialdhyde_dh"/>
    <property type="match status" value="1"/>
</dbReference>
<dbReference type="Pfam" id="PF22698">
    <property type="entry name" value="Semialdhyde_dhC_1"/>
    <property type="match status" value="1"/>
</dbReference>
<dbReference type="SMART" id="SM00859">
    <property type="entry name" value="Semialdhyde_dh"/>
    <property type="match status" value="1"/>
</dbReference>
<dbReference type="SUPFAM" id="SSF55347">
    <property type="entry name" value="Glyceraldehyde-3-phosphate dehydrogenase-like, C-terminal domain"/>
    <property type="match status" value="1"/>
</dbReference>
<dbReference type="SUPFAM" id="SSF51735">
    <property type="entry name" value="NAD(P)-binding Rossmann-fold domains"/>
    <property type="match status" value="1"/>
</dbReference>
<dbReference type="PROSITE" id="PS01224">
    <property type="entry name" value="ARGC"/>
    <property type="match status" value="1"/>
</dbReference>
<sequence>MYSVSIIGASGYTGAQLVQLVLQHPKLELAGTYVSENSNDANKSIAELHGNLAHVNATLTPISDTALSEMANGVDFIFLATPHEASHDWMPILSSGKAKVLDLSGAFRIKDTAVFEQFYGFPHTQTQSLAQAVYGLAEWHEAQIASADVIAVPGCYPTASLSALKPLAHNGLLDESVRPVINAVSGVSGAGRKASLTTSFFEVSLQAYGVLGHRHTPEIEAYLGTPVIFTPHLGNFKRGILATVTVKVKAGTTSAQLEKAYTDAYADKPIVRLRKSFPKIDDVAHTPFVDLHWKLDEASGYAVVTAAIDNVMKGAASQAIQCLNIMTKQPIETGLVL</sequence>
<gene>
    <name evidence="1" type="primary">argC</name>
    <name type="ordered locus">MADE_1002665</name>
</gene>
<feature type="chain" id="PRO_1000096712" description="N-acetyl-gamma-glutamyl-phosphate reductase">
    <location>
        <begin position="1"/>
        <end position="337"/>
    </location>
</feature>
<feature type="active site" evidence="1">
    <location>
        <position position="155"/>
    </location>
</feature>
<name>ARGC_ALTMD</name>
<accession>B4S0H8</accession>
<accession>F2G7A2</accession>
<comment type="function">
    <text evidence="1">Catalyzes the NADPH-dependent reduction of N-acetyl-5-glutamyl phosphate to yield N-acetyl-L-glutamate 5-semialdehyde.</text>
</comment>
<comment type="catalytic activity">
    <reaction evidence="1">
        <text>N-acetyl-L-glutamate 5-semialdehyde + phosphate + NADP(+) = N-acetyl-L-glutamyl 5-phosphate + NADPH + H(+)</text>
        <dbReference type="Rhea" id="RHEA:21588"/>
        <dbReference type="ChEBI" id="CHEBI:15378"/>
        <dbReference type="ChEBI" id="CHEBI:29123"/>
        <dbReference type="ChEBI" id="CHEBI:43474"/>
        <dbReference type="ChEBI" id="CHEBI:57783"/>
        <dbReference type="ChEBI" id="CHEBI:57936"/>
        <dbReference type="ChEBI" id="CHEBI:58349"/>
        <dbReference type="EC" id="1.2.1.38"/>
    </reaction>
</comment>
<comment type="pathway">
    <text evidence="1">Amino-acid biosynthesis; L-arginine biosynthesis; N(2)-acetyl-L-ornithine from L-glutamate: step 3/4.</text>
</comment>
<comment type="subcellular location">
    <subcellularLocation>
        <location evidence="1">Cytoplasm</location>
    </subcellularLocation>
</comment>
<comment type="similarity">
    <text evidence="1">Belongs to the NAGSA dehydrogenase family. Type 1 subfamily.</text>
</comment>
<proteinExistence type="inferred from homology"/>
<keyword id="KW-0028">Amino-acid biosynthesis</keyword>
<keyword id="KW-0055">Arginine biosynthesis</keyword>
<keyword id="KW-0963">Cytoplasm</keyword>
<keyword id="KW-0521">NADP</keyword>
<keyword id="KW-0560">Oxidoreductase</keyword>
<organism>
    <name type="scientific">Alteromonas mediterranea (strain DSM 17117 / CIP 110805 / LMG 28347 / Deep ecotype)</name>
    <dbReference type="NCBI Taxonomy" id="1774373"/>
    <lineage>
        <taxon>Bacteria</taxon>
        <taxon>Pseudomonadati</taxon>
        <taxon>Pseudomonadota</taxon>
        <taxon>Gammaproteobacteria</taxon>
        <taxon>Alteromonadales</taxon>
        <taxon>Alteromonadaceae</taxon>
        <taxon>Alteromonas/Salinimonas group</taxon>
        <taxon>Alteromonas</taxon>
    </lineage>
</organism>
<protein>
    <recommendedName>
        <fullName evidence="1">N-acetyl-gamma-glutamyl-phosphate reductase</fullName>
        <shortName evidence="1">AGPR</shortName>
        <ecNumber evidence="1">1.2.1.38</ecNumber>
    </recommendedName>
    <alternativeName>
        <fullName evidence="1">N-acetyl-glutamate semialdehyde dehydrogenase</fullName>
        <shortName evidence="1">NAGSA dehydrogenase</shortName>
    </alternativeName>
</protein>
<reference key="1">
    <citation type="journal article" date="2008" name="ISME J.">
        <title>Comparative genomics of two ecotypes of the marine planktonic copiotroph Alteromonas macleodii suggests alternative lifestyles associated with different kinds of particulate organic matter.</title>
        <authorList>
            <person name="Ivars-Martinez E."/>
            <person name="Martin-Cuadrado A.-B."/>
            <person name="D'Auria G."/>
            <person name="Mira A."/>
            <person name="Ferriera S."/>
            <person name="Johnson J."/>
            <person name="Friedman R."/>
            <person name="Rodriguez-Valera F."/>
        </authorList>
    </citation>
    <scope>NUCLEOTIDE SEQUENCE [LARGE SCALE GENOMIC DNA]</scope>
    <source>
        <strain>DSM 17117 / CIP 110805 / LMG 28347 / Deep ecotype</strain>
    </source>
</reference>